<sequence>MDVILMLNKRELAYWCVVNDRKLYLLDNAIPLLEKSELTFNTDSARVIGEYLDHPVYWLEANNCLHSDDFYTQRELLGIDQALFDLAGRATQLSHMLHTQSFCSVCGGAAVLADDQFAMVCQQCSNAQYPRVSPCIIVAVRKEDQILLAQHPRHKTGIYTVIAGFVEAGETLEQCVAREVEEETGIQVKNIRYFSSQPWAFPSNIMMAFLADYESGEINPDYEELSDAIWAKAAELPAIAPKGTIARVLIDETLALIKATKHVQNL</sequence>
<keyword id="KW-0378">Hydrolase</keyword>
<keyword id="KW-0460">Magnesium</keyword>
<keyword id="KW-0464">Manganese</keyword>
<keyword id="KW-0479">Metal-binding</keyword>
<keyword id="KW-0520">NAD</keyword>
<keyword id="KW-1185">Reference proteome</keyword>
<keyword id="KW-0862">Zinc</keyword>
<dbReference type="EC" id="3.6.1.-" evidence="1"/>
<dbReference type="EC" id="3.6.1.22" evidence="1"/>
<dbReference type="EMBL" id="CR378674">
    <property type="protein sequence ID" value="CAG21713.1"/>
    <property type="molecule type" value="Genomic_DNA"/>
</dbReference>
<dbReference type="SMR" id="Q6LLW5"/>
<dbReference type="STRING" id="298386.PBPRA3429"/>
<dbReference type="KEGG" id="ppr:PBPRA3429"/>
<dbReference type="eggNOG" id="COG2816">
    <property type="taxonomic scope" value="Bacteria"/>
</dbReference>
<dbReference type="HOGENOM" id="CLU_037162_0_1_6"/>
<dbReference type="Proteomes" id="UP000000593">
    <property type="component" value="Chromosome 1"/>
</dbReference>
<dbReference type="GO" id="GO:0005829">
    <property type="term" value="C:cytosol"/>
    <property type="evidence" value="ECO:0007669"/>
    <property type="project" value="TreeGrafter"/>
</dbReference>
<dbReference type="GO" id="GO:0000287">
    <property type="term" value="F:magnesium ion binding"/>
    <property type="evidence" value="ECO:0007669"/>
    <property type="project" value="UniProtKB-UniRule"/>
</dbReference>
<dbReference type="GO" id="GO:0030145">
    <property type="term" value="F:manganese ion binding"/>
    <property type="evidence" value="ECO:0007669"/>
    <property type="project" value="UniProtKB-UniRule"/>
</dbReference>
<dbReference type="GO" id="GO:0000210">
    <property type="term" value="F:NAD+ diphosphatase activity"/>
    <property type="evidence" value="ECO:0007669"/>
    <property type="project" value="UniProtKB-UniRule"/>
</dbReference>
<dbReference type="GO" id="GO:0035529">
    <property type="term" value="F:NADH pyrophosphatase activity"/>
    <property type="evidence" value="ECO:0007669"/>
    <property type="project" value="TreeGrafter"/>
</dbReference>
<dbReference type="GO" id="GO:0110153">
    <property type="term" value="F:RNA NAD-cap (NMN-forming) hydrolase activity"/>
    <property type="evidence" value="ECO:0007669"/>
    <property type="project" value="RHEA"/>
</dbReference>
<dbReference type="GO" id="GO:0008270">
    <property type="term" value="F:zinc ion binding"/>
    <property type="evidence" value="ECO:0007669"/>
    <property type="project" value="UniProtKB-UniRule"/>
</dbReference>
<dbReference type="GO" id="GO:0019677">
    <property type="term" value="P:NAD catabolic process"/>
    <property type="evidence" value="ECO:0007669"/>
    <property type="project" value="TreeGrafter"/>
</dbReference>
<dbReference type="GO" id="GO:0006734">
    <property type="term" value="P:NADH metabolic process"/>
    <property type="evidence" value="ECO:0007669"/>
    <property type="project" value="TreeGrafter"/>
</dbReference>
<dbReference type="GO" id="GO:0006742">
    <property type="term" value="P:NADP catabolic process"/>
    <property type="evidence" value="ECO:0007669"/>
    <property type="project" value="TreeGrafter"/>
</dbReference>
<dbReference type="CDD" id="cd03429">
    <property type="entry name" value="NUDIX_NADH_pyrophosphatase_Nudt13"/>
    <property type="match status" value="1"/>
</dbReference>
<dbReference type="FunFam" id="3.90.79.10:FF:000004">
    <property type="entry name" value="NADH pyrophosphatase"/>
    <property type="match status" value="1"/>
</dbReference>
<dbReference type="Gene3D" id="3.90.79.20">
    <property type="match status" value="1"/>
</dbReference>
<dbReference type="Gene3D" id="3.90.79.10">
    <property type="entry name" value="Nucleoside Triphosphate Pyrophosphohydrolase"/>
    <property type="match status" value="1"/>
</dbReference>
<dbReference type="HAMAP" id="MF_00297">
    <property type="entry name" value="Nudix_NudC"/>
    <property type="match status" value="1"/>
</dbReference>
<dbReference type="InterPro" id="IPR050241">
    <property type="entry name" value="NAD-cap_RNA_hydrolase_NudC"/>
</dbReference>
<dbReference type="InterPro" id="IPR049734">
    <property type="entry name" value="NudC-like_C"/>
</dbReference>
<dbReference type="InterPro" id="IPR020476">
    <property type="entry name" value="Nudix_hydrolase"/>
</dbReference>
<dbReference type="InterPro" id="IPR015797">
    <property type="entry name" value="NUDIX_hydrolase-like_dom_sf"/>
</dbReference>
<dbReference type="InterPro" id="IPR020084">
    <property type="entry name" value="NUDIX_hydrolase_CS"/>
</dbReference>
<dbReference type="InterPro" id="IPR000086">
    <property type="entry name" value="NUDIX_hydrolase_dom"/>
</dbReference>
<dbReference type="InterPro" id="IPR022925">
    <property type="entry name" value="RNA_Hydrolase_NudC"/>
</dbReference>
<dbReference type="InterPro" id="IPR015376">
    <property type="entry name" value="Znr_NADH_PPase"/>
</dbReference>
<dbReference type="NCBIfam" id="NF001299">
    <property type="entry name" value="PRK00241.1"/>
    <property type="match status" value="1"/>
</dbReference>
<dbReference type="PANTHER" id="PTHR42904:SF6">
    <property type="entry name" value="NAD-CAPPED RNA HYDROLASE NUDT12"/>
    <property type="match status" value="1"/>
</dbReference>
<dbReference type="PANTHER" id="PTHR42904">
    <property type="entry name" value="NUDIX HYDROLASE, NUDC SUBFAMILY"/>
    <property type="match status" value="1"/>
</dbReference>
<dbReference type="Pfam" id="PF00293">
    <property type="entry name" value="NUDIX"/>
    <property type="match status" value="1"/>
</dbReference>
<dbReference type="Pfam" id="PF09297">
    <property type="entry name" value="Zn_ribbon_NUD"/>
    <property type="match status" value="1"/>
</dbReference>
<dbReference type="PRINTS" id="PR00502">
    <property type="entry name" value="NUDIXFAMILY"/>
</dbReference>
<dbReference type="SUPFAM" id="SSF55811">
    <property type="entry name" value="Nudix"/>
    <property type="match status" value="2"/>
</dbReference>
<dbReference type="PROSITE" id="PS51462">
    <property type="entry name" value="NUDIX"/>
    <property type="match status" value="1"/>
</dbReference>
<dbReference type="PROSITE" id="PS00893">
    <property type="entry name" value="NUDIX_BOX"/>
    <property type="match status" value="1"/>
</dbReference>
<gene>
    <name evidence="1" type="primary">nudC</name>
    <name type="ordered locus">PBPRA3429</name>
</gene>
<organism>
    <name type="scientific">Photobacterium profundum (strain SS9)</name>
    <dbReference type="NCBI Taxonomy" id="298386"/>
    <lineage>
        <taxon>Bacteria</taxon>
        <taxon>Pseudomonadati</taxon>
        <taxon>Pseudomonadota</taxon>
        <taxon>Gammaproteobacteria</taxon>
        <taxon>Vibrionales</taxon>
        <taxon>Vibrionaceae</taxon>
        <taxon>Photobacterium</taxon>
    </lineage>
</organism>
<feature type="chain" id="PRO_1000071960" description="NAD-capped RNA hydrolase NudC">
    <location>
        <begin position="1"/>
        <end position="266"/>
    </location>
</feature>
<feature type="domain" description="Nudix hydrolase" evidence="1">
    <location>
        <begin position="130"/>
        <end position="253"/>
    </location>
</feature>
<feature type="short sequence motif" description="Nudix box" evidence="1">
    <location>
        <begin position="164"/>
        <end position="185"/>
    </location>
</feature>
<feature type="binding site" evidence="1">
    <location>
        <position position="74"/>
    </location>
    <ligand>
        <name>substrate</name>
    </ligand>
</feature>
<feature type="binding site" evidence="1">
    <location>
        <position position="103"/>
    </location>
    <ligand>
        <name>Zn(2+)</name>
        <dbReference type="ChEBI" id="CHEBI:29105"/>
    </ligand>
</feature>
<feature type="binding site" evidence="1">
    <location>
        <position position="106"/>
    </location>
    <ligand>
        <name>Zn(2+)</name>
        <dbReference type="ChEBI" id="CHEBI:29105"/>
    </ligand>
</feature>
<feature type="binding site" evidence="1">
    <location>
        <position position="121"/>
    </location>
    <ligand>
        <name>Zn(2+)</name>
        <dbReference type="ChEBI" id="CHEBI:29105"/>
    </ligand>
</feature>
<feature type="binding site" evidence="1">
    <location>
        <position position="124"/>
    </location>
    <ligand>
        <name>Zn(2+)</name>
        <dbReference type="ChEBI" id="CHEBI:29105"/>
    </ligand>
</feature>
<feature type="binding site" evidence="1">
    <location>
        <position position="129"/>
    </location>
    <ligand>
        <name>substrate</name>
    </ligand>
</feature>
<feature type="binding site" evidence="1">
    <location>
        <position position="163"/>
    </location>
    <ligand>
        <name>a divalent metal cation</name>
        <dbReference type="ChEBI" id="CHEBI:60240"/>
        <label>1</label>
    </ligand>
</feature>
<feature type="binding site" evidence="1">
    <location>
        <position position="179"/>
    </location>
    <ligand>
        <name>a divalent metal cation</name>
        <dbReference type="ChEBI" id="CHEBI:60240"/>
        <label>2</label>
    </ligand>
</feature>
<feature type="binding site" evidence="1">
    <location>
        <position position="179"/>
    </location>
    <ligand>
        <name>a divalent metal cation</name>
        <dbReference type="ChEBI" id="CHEBI:60240"/>
        <label>3</label>
    </ligand>
</feature>
<feature type="binding site" evidence="1">
    <location>
        <position position="183"/>
    </location>
    <ligand>
        <name>a divalent metal cation</name>
        <dbReference type="ChEBI" id="CHEBI:60240"/>
        <label>1</label>
    </ligand>
</feature>
<feature type="binding site" evidence="1">
    <location>
        <position position="183"/>
    </location>
    <ligand>
        <name>a divalent metal cation</name>
        <dbReference type="ChEBI" id="CHEBI:60240"/>
        <label>3</label>
    </ligand>
</feature>
<feature type="binding site" evidence="1">
    <location>
        <begin position="197"/>
        <end position="204"/>
    </location>
    <ligand>
        <name>substrate</name>
    </ligand>
</feature>
<feature type="binding site" evidence="1">
    <location>
        <position position="224"/>
    </location>
    <ligand>
        <name>a divalent metal cation</name>
        <dbReference type="ChEBI" id="CHEBI:60240"/>
        <label>1</label>
    </ligand>
</feature>
<feature type="binding site" evidence="1">
    <location>
        <position position="224"/>
    </location>
    <ligand>
        <name>a divalent metal cation</name>
        <dbReference type="ChEBI" id="CHEBI:60240"/>
        <label>3</label>
    </ligand>
</feature>
<feature type="binding site" evidence="1">
    <location>
        <position position="246"/>
    </location>
    <ligand>
        <name>substrate</name>
    </ligand>
</feature>
<protein>
    <recommendedName>
        <fullName evidence="1">NAD-capped RNA hydrolase NudC</fullName>
        <shortName evidence="1">DeNADding enzyme NudC</shortName>
        <ecNumber evidence="1">3.6.1.-</ecNumber>
    </recommendedName>
    <alternativeName>
        <fullName evidence="1">NADH pyrophosphatase</fullName>
        <ecNumber evidence="1">3.6.1.22</ecNumber>
    </alternativeName>
</protein>
<reference key="1">
    <citation type="journal article" date="2005" name="Science">
        <title>Life at depth: Photobacterium profundum genome sequence and expression analysis.</title>
        <authorList>
            <person name="Vezzi A."/>
            <person name="Campanaro S."/>
            <person name="D'Angelo M."/>
            <person name="Simonato F."/>
            <person name="Vitulo N."/>
            <person name="Lauro F.M."/>
            <person name="Cestaro A."/>
            <person name="Malacrida G."/>
            <person name="Simionati B."/>
            <person name="Cannata N."/>
            <person name="Romualdi C."/>
            <person name="Bartlett D.H."/>
            <person name="Valle G."/>
        </authorList>
    </citation>
    <scope>NUCLEOTIDE SEQUENCE [LARGE SCALE GENOMIC DNA]</scope>
    <source>
        <strain>ATCC BAA-1253 / SS9</strain>
    </source>
</reference>
<proteinExistence type="inferred from homology"/>
<name>NUDC_PHOPR</name>
<accession>Q6LLW5</accession>
<comment type="function">
    <text evidence="1">mRNA decapping enzyme that specifically removes the nicotinamide adenine dinucleotide (NAD) cap from a subset of mRNAs by hydrolyzing the diphosphate linkage to produce nicotinamide mononucleotide (NMN) and 5' monophosphate mRNA. The NAD-cap is present at the 5'-end of some mRNAs and stabilizes RNA against 5'-processing. Has preference for mRNAs with a 5'-end purine. Catalyzes the hydrolysis of a broad range of dinucleotide pyrophosphates.</text>
</comment>
<comment type="catalytic activity">
    <reaction evidence="1">
        <text>a 5'-end NAD(+)-phospho-ribonucleoside in mRNA + H2O = a 5'-end phospho-adenosine-phospho-ribonucleoside in mRNA + beta-nicotinamide D-ribonucleotide + 2 H(+)</text>
        <dbReference type="Rhea" id="RHEA:60876"/>
        <dbReference type="Rhea" id="RHEA-COMP:15698"/>
        <dbReference type="Rhea" id="RHEA-COMP:15719"/>
        <dbReference type="ChEBI" id="CHEBI:14649"/>
        <dbReference type="ChEBI" id="CHEBI:15377"/>
        <dbReference type="ChEBI" id="CHEBI:15378"/>
        <dbReference type="ChEBI" id="CHEBI:144029"/>
        <dbReference type="ChEBI" id="CHEBI:144051"/>
    </reaction>
    <physiologicalReaction direction="left-to-right" evidence="1">
        <dbReference type="Rhea" id="RHEA:60877"/>
    </physiologicalReaction>
</comment>
<comment type="catalytic activity">
    <reaction evidence="1">
        <text>NAD(+) + H2O = beta-nicotinamide D-ribonucleotide + AMP + 2 H(+)</text>
        <dbReference type="Rhea" id="RHEA:11800"/>
        <dbReference type="ChEBI" id="CHEBI:14649"/>
        <dbReference type="ChEBI" id="CHEBI:15377"/>
        <dbReference type="ChEBI" id="CHEBI:15378"/>
        <dbReference type="ChEBI" id="CHEBI:57540"/>
        <dbReference type="ChEBI" id="CHEBI:456215"/>
        <dbReference type="EC" id="3.6.1.22"/>
    </reaction>
</comment>
<comment type="catalytic activity">
    <reaction evidence="1">
        <text>NADH + H2O = reduced beta-nicotinamide D-ribonucleotide + AMP + 2 H(+)</text>
        <dbReference type="Rhea" id="RHEA:48868"/>
        <dbReference type="ChEBI" id="CHEBI:15377"/>
        <dbReference type="ChEBI" id="CHEBI:15378"/>
        <dbReference type="ChEBI" id="CHEBI:57945"/>
        <dbReference type="ChEBI" id="CHEBI:90832"/>
        <dbReference type="ChEBI" id="CHEBI:456215"/>
        <dbReference type="EC" id="3.6.1.22"/>
    </reaction>
</comment>
<comment type="cofactor">
    <cofactor evidence="1">
        <name>Mg(2+)</name>
        <dbReference type="ChEBI" id="CHEBI:18420"/>
    </cofactor>
    <cofactor evidence="1">
        <name>Mn(2+)</name>
        <dbReference type="ChEBI" id="CHEBI:29035"/>
    </cofactor>
    <text evidence="1">Divalent metal cations. Mg(2+) or Mn(2+).</text>
</comment>
<comment type="cofactor">
    <cofactor evidence="1">
        <name>Zn(2+)</name>
        <dbReference type="ChEBI" id="CHEBI:29105"/>
    </cofactor>
    <text evidence="1">Binds 1 zinc ion per subunit.</text>
</comment>
<comment type="subunit">
    <text evidence="1">Homodimer.</text>
</comment>
<comment type="similarity">
    <text evidence="1">Belongs to the Nudix hydrolase family. NudC subfamily.</text>
</comment>
<evidence type="ECO:0000255" key="1">
    <source>
        <dbReference type="HAMAP-Rule" id="MF_00297"/>
    </source>
</evidence>